<dbReference type="EC" id="2.4.2.-" evidence="1"/>
<dbReference type="EC" id="2.4.2.22" evidence="1"/>
<dbReference type="EMBL" id="CP000285">
    <property type="protein sequence ID" value="ABE59448.1"/>
    <property type="molecule type" value="Genomic_DNA"/>
</dbReference>
<dbReference type="RefSeq" id="WP_011507394.1">
    <property type="nucleotide sequence ID" value="NC_007963.1"/>
</dbReference>
<dbReference type="SMR" id="Q1QVR0"/>
<dbReference type="STRING" id="290398.Csal_2097"/>
<dbReference type="GeneID" id="95334812"/>
<dbReference type="KEGG" id="csa:Csal_2097"/>
<dbReference type="eggNOG" id="COG2236">
    <property type="taxonomic scope" value="Bacteria"/>
</dbReference>
<dbReference type="HOGENOM" id="CLU_080904_3_0_6"/>
<dbReference type="OrthoDB" id="9789690at2"/>
<dbReference type="UniPathway" id="UPA00602">
    <property type="reaction ID" value="UER00658"/>
</dbReference>
<dbReference type="UniPathway" id="UPA00909">
    <property type="reaction ID" value="UER00887"/>
</dbReference>
<dbReference type="Proteomes" id="UP000000239">
    <property type="component" value="Chromosome"/>
</dbReference>
<dbReference type="GO" id="GO:0005886">
    <property type="term" value="C:plasma membrane"/>
    <property type="evidence" value="ECO:0007669"/>
    <property type="project" value="UniProtKB-SubCell"/>
</dbReference>
<dbReference type="GO" id="GO:0052657">
    <property type="term" value="F:guanine phosphoribosyltransferase activity"/>
    <property type="evidence" value="ECO:0007669"/>
    <property type="project" value="RHEA"/>
</dbReference>
<dbReference type="GO" id="GO:0004422">
    <property type="term" value="F:hypoxanthine phosphoribosyltransferase activity"/>
    <property type="evidence" value="ECO:0007669"/>
    <property type="project" value="RHEA"/>
</dbReference>
<dbReference type="GO" id="GO:0000287">
    <property type="term" value="F:magnesium ion binding"/>
    <property type="evidence" value="ECO:0007669"/>
    <property type="project" value="UniProtKB-UniRule"/>
</dbReference>
<dbReference type="GO" id="GO:0000310">
    <property type="term" value="F:xanthine phosphoribosyltransferase activity"/>
    <property type="evidence" value="ECO:0007669"/>
    <property type="project" value="UniProtKB-UniRule"/>
</dbReference>
<dbReference type="GO" id="GO:0032263">
    <property type="term" value="P:GMP salvage"/>
    <property type="evidence" value="ECO:0007669"/>
    <property type="project" value="UniProtKB-UniRule"/>
</dbReference>
<dbReference type="GO" id="GO:0006166">
    <property type="term" value="P:purine ribonucleoside salvage"/>
    <property type="evidence" value="ECO:0007669"/>
    <property type="project" value="UniProtKB-KW"/>
</dbReference>
<dbReference type="GO" id="GO:0032265">
    <property type="term" value="P:XMP salvage"/>
    <property type="evidence" value="ECO:0007669"/>
    <property type="project" value="UniProtKB-UniRule"/>
</dbReference>
<dbReference type="CDD" id="cd06223">
    <property type="entry name" value="PRTases_typeI"/>
    <property type="match status" value="1"/>
</dbReference>
<dbReference type="Gene3D" id="3.40.50.2020">
    <property type="match status" value="1"/>
</dbReference>
<dbReference type="HAMAP" id="MF_01903">
    <property type="entry name" value="XGPRT"/>
    <property type="match status" value="1"/>
</dbReference>
<dbReference type="InterPro" id="IPR000836">
    <property type="entry name" value="PRibTrfase_dom"/>
</dbReference>
<dbReference type="InterPro" id="IPR029057">
    <property type="entry name" value="PRTase-like"/>
</dbReference>
<dbReference type="InterPro" id="IPR023747">
    <property type="entry name" value="Xanthine_Guanine_PRibTrfase"/>
</dbReference>
<dbReference type="NCBIfam" id="NF006613">
    <property type="entry name" value="PRK09177.1"/>
    <property type="match status" value="1"/>
</dbReference>
<dbReference type="PANTHER" id="PTHR39563">
    <property type="entry name" value="XANTHINE PHOSPHORIBOSYLTRANSFERASE"/>
    <property type="match status" value="1"/>
</dbReference>
<dbReference type="PANTHER" id="PTHR39563:SF1">
    <property type="entry name" value="XANTHINE-GUANINE PHOSPHORIBOSYLTRANSFERASE"/>
    <property type="match status" value="1"/>
</dbReference>
<dbReference type="Pfam" id="PF00156">
    <property type="entry name" value="Pribosyltran"/>
    <property type="match status" value="1"/>
</dbReference>
<dbReference type="SUPFAM" id="SSF53271">
    <property type="entry name" value="PRTase-like"/>
    <property type="match status" value="1"/>
</dbReference>
<dbReference type="PROSITE" id="PS00103">
    <property type="entry name" value="PUR_PYR_PR_TRANSFER"/>
    <property type="match status" value="1"/>
</dbReference>
<evidence type="ECO:0000255" key="1">
    <source>
        <dbReference type="HAMAP-Rule" id="MF_01903"/>
    </source>
</evidence>
<sequence>MSIDRYHQQFTVSWDQLHRDVRALCHQLVERDFQGIVAITRGGLIPAALIARELNVRLVDTVCIKSYEHQDQGGLQVMKGIDHDGAGWLLVDDLVDTGNTARAVREMLPEAHFVTVYAKPEGRPLVDQYLTEVAQDCWIQFPWDMGVAYVEPLVDQVRSRDS</sequence>
<organism>
    <name type="scientific">Chromohalobacter salexigens (strain ATCC BAA-138 / DSM 3043 / CIP 106854 / NCIMB 13768 / 1H11)</name>
    <dbReference type="NCBI Taxonomy" id="290398"/>
    <lineage>
        <taxon>Bacteria</taxon>
        <taxon>Pseudomonadati</taxon>
        <taxon>Pseudomonadota</taxon>
        <taxon>Gammaproteobacteria</taxon>
        <taxon>Oceanospirillales</taxon>
        <taxon>Halomonadaceae</taxon>
        <taxon>Chromohalobacter</taxon>
    </lineage>
</organism>
<accession>Q1QVR0</accession>
<reference key="1">
    <citation type="journal article" date="2011" name="Stand. Genomic Sci.">
        <title>Complete genome sequence of the halophilic and highly halotolerant Chromohalobacter salexigens type strain (1H11(T)).</title>
        <authorList>
            <person name="Copeland A."/>
            <person name="O'Connor K."/>
            <person name="Lucas S."/>
            <person name="Lapidus A."/>
            <person name="Berry K.W."/>
            <person name="Detter J.C."/>
            <person name="Del Rio T.G."/>
            <person name="Hammon N."/>
            <person name="Dalin E."/>
            <person name="Tice H."/>
            <person name="Pitluck S."/>
            <person name="Bruce D."/>
            <person name="Goodwin L."/>
            <person name="Han C."/>
            <person name="Tapia R."/>
            <person name="Saunders E."/>
            <person name="Schmutz J."/>
            <person name="Brettin T."/>
            <person name="Larimer F."/>
            <person name="Land M."/>
            <person name="Hauser L."/>
            <person name="Vargas C."/>
            <person name="Nieto J.J."/>
            <person name="Kyrpides N.C."/>
            <person name="Ivanova N."/>
            <person name="Goker M."/>
            <person name="Klenk H.P."/>
            <person name="Csonka L.N."/>
            <person name="Woyke T."/>
        </authorList>
    </citation>
    <scope>NUCLEOTIDE SEQUENCE [LARGE SCALE GENOMIC DNA]</scope>
    <source>
        <strain>ATCC BAA-138 / DSM 3043 / CIP 106854 / NCIMB 13768 / 1H11</strain>
    </source>
</reference>
<proteinExistence type="inferred from homology"/>
<name>XGPT_CHRSD</name>
<protein>
    <recommendedName>
        <fullName evidence="1">Xanthine-guanine phosphoribosyltransferase</fullName>
        <shortName evidence="1">XGPRT</shortName>
        <ecNumber evidence="1">2.4.2.-</ecNumber>
        <ecNumber evidence="1">2.4.2.22</ecNumber>
    </recommendedName>
    <alternativeName>
        <fullName evidence="1">Xanthine phosphoribosyltransferase</fullName>
    </alternativeName>
</protein>
<keyword id="KW-0997">Cell inner membrane</keyword>
<keyword id="KW-1003">Cell membrane</keyword>
<keyword id="KW-0328">Glycosyltransferase</keyword>
<keyword id="KW-0460">Magnesium</keyword>
<keyword id="KW-0472">Membrane</keyword>
<keyword id="KW-0479">Metal-binding</keyword>
<keyword id="KW-0660">Purine salvage</keyword>
<keyword id="KW-1185">Reference proteome</keyword>
<keyword id="KW-0808">Transferase</keyword>
<feature type="chain" id="PRO_0000261004" description="Xanthine-guanine phosphoribosyltransferase">
    <location>
        <begin position="1"/>
        <end position="162"/>
    </location>
</feature>
<feature type="binding site" evidence="1">
    <location>
        <begin position="41"/>
        <end position="42"/>
    </location>
    <ligand>
        <name>5-phospho-alpha-D-ribose 1-diphosphate</name>
        <dbReference type="ChEBI" id="CHEBI:58017"/>
    </ligand>
</feature>
<feature type="binding site" evidence="1">
    <location>
        <begin position="92"/>
        <end position="100"/>
    </location>
    <ligand>
        <name>5-phospho-alpha-D-ribose 1-diphosphate</name>
        <dbReference type="ChEBI" id="CHEBI:58017"/>
    </ligand>
</feature>
<feature type="binding site" evidence="1">
    <location>
        <position position="93"/>
    </location>
    <ligand>
        <name>Mg(2+)</name>
        <dbReference type="ChEBI" id="CHEBI:18420"/>
    </ligand>
</feature>
<feature type="binding site" evidence="1">
    <location>
        <begin position="96"/>
        <end position="100"/>
    </location>
    <ligand>
        <name>GMP</name>
        <dbReference type="ChEBI" id="CHEBI:58115"/>
    </ligand>
</feature>
<feature type="binding site" evidence="1">
    <location>
        <position position="96"/>
    </location>
    <ligand>
        <name>guanine</name>
        <dbReference type="ChEBI" id="CHEBI:16235"/>
    </ligand>
</feature>
<feature type="binding site" evidence="1">
    <location>
        <position position="96"/>
    </location>
    <ligand>
        <name>xanthine</name>
        <dbReference type="ChEBI" id="CHEBI:17712"/>
    </ligand>
</feature>
<feature type="binding site" evidence="1">
    <location>
        <begin position="138"/>
        <end position="139"/>
    </location>
    <ligand>
        <name>GMP</name>
        <dbReference type="ChEBI" id="CHEBI:58115"/>
    </ligand>
</feature>
<feature type="binding site" evidence="1">
    <location>
        <position position="139"/>
    </location>
    <ligand>
        <name>guanine</name>
        <dbReference type="ChEBI" id="CHEBI:16235"/>
    </ligand>
</feature>
<feature type="binding site" evidence="1">
    <location>
        <position position="139"/>
    </location>
    <ligand>
        <name>xanthine</name>
        <dbReference type="ChEBI" id="CHEBI:17712"/>
    </ligand>
</feature>
<gene>
    <name evidence="1" type="primary">gpt</name>
    <name type="ordered locus">Csal_2097</name>
</gene>
<comment type="function">
    <text evidence="1">Purine salvage pathway enzyme that catalyzes the transfer of the ribosyl-5-phosphate group from 5-phospho-alpha-D-ribose 1-diphosphate (PRPP) to the N9 position of the 6-oxopurines guanine and xanthine to form the corresponding ribonucleotides GMP (guanosine 5'-monophosphate) and XMP (xanthosine 5'-monophosphate), with the release of PPi. To a lesser extent, also acts on hypoxanthine.</text>
</comment>
<comment type="catalytic activity">
    <reaction evidence="1">
        <text>GMP + diphosphate = guanine + 5-phospho-alpha-D-ribose 1-diphosphate</text>
        <dbReference type="Rhea" id="RHEA:25424"/>
        <dbReference type="ChEBI" id="CHEBI:16235"/>
        <dbReference type="ChEBI" id="CHEBI:33019"/>
        <dbReference type="ChEBI" id="CHEBI:58017"/>
        <dbReference type="ChEBI" id="CHEBI:58115"/>
    </reaction>
    <physiologicalReaction direction="right-to-left" evidence="1">
        <dbReference type="Rhea" id="RHEA:25426"/>
    </physiologicalReaction>
</comment>
<comment type="catalytic activity">
    <reaction evidence="1">
        <text>XMP + diphosphate = xanthine + 5-phospho-alpha-D-ribose 1-diphosphate</text>
        <dbReference type="Rhea" id="RHEA:10800"/>
        <dbReference type="ChEBI" id="CHEBI:17712"/>
        <dbReference type="ChEBI" id="CHEBI:33019"/>
        <dbReference type="ChEBI" id="CHEBI:57464"/>
        <dbReference type="ChEBI" id="CHEBI:58017"/>
        <dbReference type="EC" id="2.4.2.22"/>
    </reaction>
    <physiologicalReaction direction="right-to-left" evidence="1">
        <dbReference type="Rhea" id="RHEA:10802"/>
    </physiologicalReaction>
</comment>
<comment type="catalytic activity">
    <reaction evidence="1">
        <text>IMP + diphosphate = hypoxanthine + 5-phospho-alpha-D-ribose 1-diphosphate</text>
        <dbReference type="Rhea" id="RHEA:17973"/>
        <dbReference type="ChEBI" id="CHEBI:17368"/>
        <dbReference type="ChEBI" id="CHEBI:33019"/>
        <dbReference type="ChEBI" id="CHEBI:58017"/>
        <dbReference type="ChEBI" id="CHEBI:58053"/>
    </reaction>
    <physiologicalReaction direction="right-to-left" evidence="1">
        <dbReference type="Rhea" id="RHEA:17975"/>
    </physiologicalReaction>
</comment>
<comment type="cofactor">
    <cofactor evidence="1">
        <name>Mg(2+)</name>
        <dbReference type="ChEBI" id="CHEBI:18420"/>
    </cofactor>
</comment>
<comment type="pathway">
    <text evidence="1">Purine metabolism; GMP biosynthesis via salvage pathway; GMP from guanine: step 1/1.</text>
</comment>
<comment type="pathway">
    <text evidence="1">Purine metabolism; XMP biosynthesis via salvage pathway; XMP from xanthine: step 1/1.</text>
</comment>
<comment type="subunit">
    <text evidence="1">Homotetramer.</text>
</comment>
<comment type="subcellular location">
    <subcellularLocation>
        <location evidence="1">Cell inner membrane</location>
        <topology evidence="1">Peripheral membrane protein</topology>
    </subcellularLocation>
</comment>
<comment type="similarity">
    <text evidence="1">Belongs to the purine/pyrimidine phosphoribosyltransferase family. XGPT subfamily.</text>
</comment>